<organism>
    <name type="scientific">Synechococcus sp. (strain ATCC 27144 / PCC 6301 / SAUG 1402/1)</name>
    <name type="common">Anacystis nidulans</name>
    <dbReference type="NCBI Taxonomy" id="269084"/>
    <lineage>
        <taxon>Bacteria</taxon>
        <taxon>Bacillati</taxon>
        <taxon>Cyanobacteriota</taxon>
        <taxon>Cyanophyceae</taxon>
        <taxon>Synechococcales</taxon>
        <taxon>Synechococcaceae</taxon>
        <taxon>Synechococcus</taxon>
    </lineage>
</organism>
<protein>
    <recommendedName>
        <fullName evidence="1">Aspartate--tRNA(Asp/Asn) ligase</fullName>
        <ecNumber evidence="1">6.1.1.23</ecNumber>
    </recommendedName>
    <alternativeName>
        <fullName evidence="1">Aspartyl-tRNA synthetase</fullName>
        <shortName evidence="1">AspRS</shortName>
    </alternativeName>
    <alternativeName>
        <fullName evidence="1">Non-discriminating aspartyl-tRNA synthetase</fullName>
        <shortName evidence="1">ND-AspRS</shortName>
    </alternativeName>
</protein>
<proteinExistence type="inferred from homology"/>
<reference key="1">
    <citation type="journal article" date="2007" name="Photosyn. Res.">
        <title>Complete nucleotide sequence of the freshwater unicellular cyanobacterium Synechococcus elongatus PCC 6301 chromosome: gene content and organization.</title>
        <authorList>
            <person name="Sugita C."/>
            <person name="Ogata K."/>
            <person name="Shikata M."/>
            <person name="Jikuya H."/>
            <person name="Takano J."/>
            <person name="Furumichi M."/>
            <person name="Kanehisa M."/>
            <person name="Omata T."/>
            <person name="Sugiura M."/>
            <person name="Sugita M."/>
        </authorList>
    </citation>
    <scope>NUCLEOTIDE SEQUENCE [LARGE SCALE GENOMIC DNA]</scope>
    <source>
        <strain>ATCC 27144 / PCC 6301 / SAUG 1402/1</strain>
    </source>
</reference>
<name>SYDND_SYNP6</name>
<evidence type="ECO:0000255" key="1">
    <source>
        <dbReference type="HAMAP-Rule" id="MF_00044"/>
    </source>
</evidence>
<keyword id="KW-0030">Aminoacyl-tRNA synthetase</keyword>
<keyword id="KW-0067">ATP-binding</keyword>
<keyword id="KW-0963">Cytoplasm</keyword>
<keyword id="KW-0436">Ligase</keyword>
<keyword id="KW-0547">Nucleotide-binding</keyword>
<keyword id="KW-0648">Protein biosynthesis</keyword>
<dbReference type="EC" id="6.1.1.23" evidence="1"/>
<dbReference type="EMBL" id="AP008231">
    <property type="protein sequence ID" value="BAD78430.1"/>
    <property type="molecule type" value="Genomic_DNA"/>
</dbReference>
<dbReference type="RefSeq" id="WP_011242554.1">
    <property type="nucleotide sequence ID" value="NC_006576.1"/>
</dbReference>
<dbReference type="SMR" id="Q5N5I8"/>
<dbReference type="KEGG" id="syc:syc0240_c"/>
<dbReference type="eggNOG" id="COG0173">
    <property type="taxonomic scope" value="Bacteria"/>
</dbReference>
<dbReference type="Proteomes" id="UP000001175">
    <property type="component" value="Chromosome"/>
</dbReference>
<dbReference type="GO" id="GO:0005737">
    <property type="term" value="C:cytoplasm"/>
    <property type="evidence" value="ECO:0007669"/>
    <property type="project" value="UniProtKB-SubCell"/>
</dbReference>
<dbReference type="GO" id="GO:0004815">
    <property type="term" value="F:aspartate-tRNA ligase activity"/>
    <property type="evidence" value="ECO:0007669"/>
    <property type="project" value="UniProtKB-UniRule"/>
</dbReference>
<dbReference type="GO" id="GO:0050560">
    <property type="term" value="F:aspartate-tRNA(Asn) ligase activity"/>
    <property type="evidence" value="ECO:0007669"/>
    <property type="project" value="UniProtKB-EC"/>
</dbReference>
<dbReference type="GO" id="GO:0005524">
    <property type="term" value="F:ATP binding"/>
    <property type="evidence" value="ECO:0007669"/>
    <property type="project" value="UniProtKB-UniRule"/>
</dbReference>
<dbReference type="GO" id="GO:0003676">
    <property type="term" value="F:nucleic acid binding"/>
    <property type="evidence" value="ECO:0007669"/>
    <property type="project" value="InterPro"/>
</dbReference>
<dbReference type="GO" id="GO:0006422">
    <property type="term" value="P:aspartyl-tRNA aminoacylation"/>
    <property type="evidence" value="ECO:0007669"/>
    <property type="project" value="UniProtKB-UniRule"/>
</dbReference>
<dbReference type="CDD" id="cd00777">
    <property type="entry name" value="AspRS_core"/>
    <property type="match status" value="1"/>
</dbReference>
<dbReference type="CDD" id="cd04317">
    <property type="entry name" value="EcAspRS_like_N"/>
    <property type="match status" value="1"/>
</dbReference>
<dbReference type="Gene3D" id="3.30.930.10">
    <property type="entry name" value="Bira Bifunctional Protein, Domain 2"/>
    <property type="match status" value="1"/>
</dbReference>
<dbReference type="Gene3D" id="3.30.1360.30">
    <property type="entry name" value="GAD-like domain"/>
    <property type="match status" value="1"/>
</dbReference>
<dbReference type="Gene3D" id="2.40.50.140">
    <property type="entry name" value="Nucleic acid-binding proteins"/>
    <property type="match status" value="1"/>
</dbReference>
<dbReference type="HAMAP" id="MF_00044">
    <property type="entry name" value="Asp_tRNA_synth_type1"/>
    <property type="match status" value="1"/>
</dbReference>
<dbReference type="InterPro" id="IPR004364">
    <property type="entry name" value="Aa-tRNA-synt_II"/>
</dbReference>
<dbReference type="InterPro" id="IPR006195">
    <property type="entry name" value="aa-tRNA-synth_II"/>
</dbReference>
<dbReference type="InterPro" id="IPR045864">
    <property type="entry name" value="aa-tRNA-synth_II/BPL/LPL"/>
</dbReference>
<dbReference type="InterPro" id="IPR004524">
    <property type="entry name" value="Asp-tRNA-ligase_1"/>
</dbReference>
<dbReference type="InterPro" id="IPR047089">
    <property type="entry name" value="Asp-tRNA-ligase_1_N"/>
</dbReference>
<dbReference type="InterPro" id="IPR002312">
    <property type="entry name" value="Asp/Asn-tRNA-synth_IIb"/>
</dbReference>
<dbReference type="InterPro" id="IPR047090">
    <property type="entry name" value="AspRS_core"/>
</dbReference>
<dbReference type="InterPro" id="IPR004115">
    <property type="entry name" value="GAD-like_sf"/>
</dbReference>
<dbReference type="InterPro" id="IPR029351">
    <property type="entry name" value="GAD_dom"/>
</dbReference>
<dbReference type="InterPro" id="IPR012340">
    <property type="entry name" value="NA-bd_OB-fold"/>
</dbReference>
<dbReference type="InterPro" id="IPR004365">
    <property type="entry name" value="NA-bd_OB_tRNA"/>
</dbReference>
<dbReference type="NCBIfam" id="TIGR00459">
    <property type="entry name" value="aspS_bact"/>
    <property type="match status" value="1"/>
</dbReference>
<dbReference type="NCBIfam" id="NF001750">
    <property type="entry name" value="PRK00476.1"/>
    <property type="match status" value="1"/>
</dbReference>
<dbReference type="PANTHER" id="PTHR22594:SF5">
    <property type="entry name" value="ASPARTATE--TRNA LIGASE, MITOCHONDRIAL"/>
    <property type="match status" value="1"/>
</dbReference>
<dbReference type="PANTHER" id="PTHR22594">
    <property type="entry name" value="ASPARTYL/LYSYL-TRNA SYNTHETASE"/>
    <property type="match status" value="1"/>
</dbReference>
<dbReference type="Pfam" id="PF02938">
    <property type="entry name" value="GAD"/>
    <property type="match status" value="1"/>
</dbReference>
<dbReference type="Pfam" id="PF00152">
    <property type="entry name" value="tRNA-synt_2"/>
    <property type="match status" value="1"/>
</dbReference>
<dbReference type="Pfam" id="PF01336">
    <property type="entry name" value="tRNA_anti-codon"/>
    <property type="match status" value="1"/>
</dbReference>
<dbReference type="PRINTS" id="PR01042">
    <property type="entry name" value="TRNASYNTHASP"/>
</dbReference>
<dbReference type="SUPFAM" id="SSF55681">
    <property type="entry name" value="Class II aaRS and biotin synthetases"/>
    <property type="match status" value="1"/>
</dbReference>
<dbReference type="SUPFAM" id="SSF55261">
    <property type="entry name" value="GAD domain-like"/>
    <property type="match status" value="1"/>
</dbReference>
<dbReference type="SUPFAM" id="SSF50249">
    <property type="entry name" value="Nucleic acid-binding proteins"/>
    <property type="match status" value="1"/>
</dbReference>
<dbReference type="PROSITE" id="PS50862">
    <property type="entry name" value="AA_TRNA_LIGASE_II"/>
    <property type="match status" value="1"/>
</dbReference>
<sequence length="599" mass="68094">MRTHYCGELRAEQVGTSVTLYGWVDRRRDHGGVIFVDLRDRTGTVQIVSDPERTPESYHQAEGLRNEYVVKITGRVSGRPAESLNPKLPTGEVEIYADRIEILNAVRRQLPFQVSSADEETVREDLRLRYRYLDLRRDRMNRNLQLRHQVVKAIRRFLEDEEQFIEIETPVLTKSTPEGARDYLVPSRVNPGEWFALPQSPQLFKQLLMVSGFDRYYQIARCFRDEDLRADRQPEFTQLDMEMSFLSQEEIIDLNERLIAHIFKTVKGIELPRPFPRLTYAEAMDRYGSDRPDTRFGLKLVDVSDVVADMGFKVFSGAVKSGGKVKILPIPDGNDRISNVRIKPGGDIFKEATEAGAAGLAYIRVRENGEIDTIGAIKDNLSDEQKAEILRRTQAQPGTLLLFGAGSTDIVNKSLDRVRQFLGKELGLIDPEALNLLWVVDFPMVEWNADEKRYEALHHPFTAPNPQDLEDLTTARAQAYDIVLNGLEIGGGSLRIYQRDIQERVFETIGLSHEEAQAKFGFLLEAFDFGTPPHGGIAYGLDRLVMLLTGEESIRDAIAFPKTQQARCLLTEAPADVSDRQLKELYVASTWQPPIKERD</sequence>
<accession>Q5N5I8</accession>
<comment type="function">
    <text evidence="1">Aspartyl-tRNA synthetase with relaxed tRNA specificity since it is able to aspartylate not only its cognate tRNA(Asp) but also tRNA(Asn). Reaction proceeds in two steps: L-aspartate is first activated by ATP to form Asp-AMP and then transferred to the acceptor end of tRNA(Asp/Asn).</text>
</comment>
<comment type="catalytic activity">
    <reaction evidence="1">
        <text>tRNA(Asx) + L-aspartate + ATP = L-aspartyl-tRNA(Asx) + AMP + diphosphate</text>
        <dbReference type="Rhea" id="RHEA:18349"/>
        <dbReference type="Rhea" id="RHEA-COMP:9710"/>
        <dbReference type="Rhea" id="RHEA-COMP:9711"/>
        <dbReference type="ChEBI" id="CHEBI:29991"/>
        <dbReference type="ChEBI" id="CHEBI:30616"/>
        <dbReference type="ChEBI" id="CHEBI:33019"/>
        <dbReference type="ChEBI" id="CHEBI:78442"/>
        <dbReference type="ChEBI" id="CHEBI:78516"/>
        <dbReference type="ChEBI" id="CHEBI:456215"/>
        <dbReference type="EC" id="6.1.1.23"/>
    </reaction>
</comment>
<comment type="subunit">
    <text evidence="1">Homodimer.</text>
</comment>
<comment type="subcellular location">
    <subcellularLocation>
        <location evidence="1">Cytoplasm</location>
    </subcellularLocation>
</comment>
<comment type="similarity">
    <text evidence="1">Belongs to the class-II aminoacyl-tRNA synthetase family. Type 1 subfamily.</text>
</comment>
<feature type="chain" id="PRO_0000110965" description="Aspartate--tRNA(Asp/Asn) ligase">
    <location>
        <begin position="1"/>
        <end position="599"/>
    </location>
</feature>
<feature type="region of interest" description="Aspartate" evidence="1">
    <location>
        <begin position="202"/>
        <end position="205"/>
    </location>
</feature>
<feature type="binding site" evidence="1">
    <location>
        <position position="178"/>
    </location>
    <ligand>
        <name>L-aspartate</name>
        <dbReference type="ChEBI" id="CHEBI:29991"/>
    </ligand>
</feature>
<feature type="binding site" evidence="1">
    <location>
        <begin position="224"/>
        <end position="226"/>
    </location>
    <ligand>
        <name>ATP</name>
        <dbReference type="ChEBI" id="CHEBI:30616"/>
    </ligand>
</feature>
<feature type="binding site" evidence="1">
    <location>
        <position position="224"/>
    </location>
    <ligand>
        <name>L-aspartate</name>
        <dbReference type="ChEBI" id="CHEBI:29991"/>
    </ligand>
</feature>
<feature type="binding site" evidence="1">
    <location>
        <position position="233"/>
    </location>
    <ligand>
        <name>ATP</name>
        <dbReference type="ChEBI" id="CHEBI:30616"/>
    </ligand>
</feature>
<feature type="binding site" evidence="1">
    <location>
        <position position="458"/>
    </location>
    <ligand>
        <name>L-aspartate</name>
        <dbReference type="ChEBI" id="CHEBI:29991"/>
    </ligand>
</feature>
<feature type="binding site" evidence="1">
    <location>
        <position position="488"/>
    </location>
    <ligand>
        <name>ATP</name>
        <dbReference type="ChEBI" id="CHEBI:30616"/>
    </ligand>
</feature>
<feature type="binding site" evidence="1">
    <location>
        <position position="495"/>
    </location>
    <ligand>
        <name>L-aspartate</name>
        <dbReference type="ChEBI" id="CHEBI:29991"/>
    </ligand>
</feature>
<feature type="binding site" evidence="1">
    <location>
        <begin position="540"/>
        <end position="543"/>
    </location>
    <ligand>
        <name>ATP</name>
        <dbReference type="ChEBI" id="CHEBI:30616"/>
    </ligand>
</feature>
<feature type="site" description="Important for tRNA non-discrimination" evidence="1">
    <location>
        <position position="30"/>
    </location>
</feature>
<gene>
    <name evidence="1" type="primary">aspS</name>
    <name type="ordered locus">syc0240_c</name>
</gene>